<proteinExistence type="inferred from homology"/>
<keyword id="KW-0963">Cytoplasm</keyword>
<keyword id="KW-0479">Metal-binding</keyword>
<keyword id="KW-0862">Zinc</keyword>
<sequence length="145" mass="17229">MTLTNYVQEVSLADFGKPFHHKAYWNKRLKTTGGRFFPKDGHLDFNPRMLEEHGELIFRKIVRHELCHYHLYFEGRGYHHKDRDFKDLLAQVNGLRYVPTSSKSKTNHHYSCQTCGQVYQRKRRINLAKYVCGNCHGKLMEKNQS</sequence>
<evidence type="ECO:0000255" key="1">
    <source>
        <dbReference type="HAMAP-Rule" id="MF_00745"/>
    </source>
</evidence>
<accession>Q1J7Q8</accession>
<comment type="cofactor">
    <cofactor evidence="1">
        <name>Zn(2+)</name>
        <dbReference type="ChEBI" id="CHEBI:29105"/>
    </cofactor>
    <text evidence="1">Binds 1 zinc ion.</text>
</comment>
<comment type="subcellular location">
    <subcellularLocation>
        <location evidence="1">Cytoplasm</location>
    </subcellularLocation>
</comment>
<comment type="similarity">
    <text evidence="1">Belongs to the SprT family.</text>
</comment>
<name>SPRTL_STRPF</name>
<feature type="chain" id="PRO_1000046518" description="Protein SprT-like">
    <location>
        <begin position="1"/>
        <end position="145"/>
    </location>
</feature>
<feature type="domain" description="SprT-like" evidence="1">
    <location>
        <begin position="4"/>
        <end position="140"/>
    </location>
</feature>
<feature type="active site" evidence="1">
    <location>
        <position position="65"/>
    </location>
</feature>
<feature type="binding site" evidence="1">
    <location>
        <position position="64"/>
    </location>
    <ligand>
        <name>Zn(2+)</name>
        <dbReference type="ChEBI" id="CHEBI:29105"/>
    </ligand>
</feature>
<feature type="binding site" evidence="1">
    <location>
        <position position="68"/>
    </location>
    <ligand>
        <name>Zn(2+)</name>
        <dbReference type="ChEBI" id="CHEBI:29105"/>
    </ligand>
</feature>
<gene>
    <name type="ordered locus">MGAS10750_Spy0503</name>
</gene>
<reference key="1">
    <citation type="journal article" date="2006" name="Proc. Natl. Acad. Sci. U.S.A.">
        <title>Molecular genetic anatomy of inter- and intraserotype variation in the human bacterial pathogen group A Streptococcus.</title>
        <authorList>
            <person name="Beres S.B."/>
            <person name="Richter E.W."/>
            <person name="Nagiec M.J."/>
            <person name="Sumby P."/>
            <person name="Porcella S.F."/>
            <person name="DeLeo F.R."/>
            <person name="Musser J.M."/>
        </authorList>
    </citation>
    <scope>NUCLEOTIDE SEQUENCE [LARGE SCALE GENOMIC DNA]</scope>
    <source>
        <strain>MGAS10750</strain>
    </source>
</reference>
<dbReference type="EMBL" id="CP000262">
    <property type="protein sequence ID" value="ABF37453.1"/>
    <property type="molecule type" value="Genomic_DNA"/>
</dbReference>
<dbReference type="KEGG" id="spi:MGAS10750_Spy0503"/>
<dbReference type="HOGENOM" id="CLU_123820_0_0_9"/>
<dbReference type="Proteomes" id="UP000002434">
    <property type="component" value="Chromosome"/>
</dbReference>
<dbReference type="GO" id="GO:0005737">
    <property type="term" value="C:cytoplasm"/>
    <property type="evidence" value="ECO:0007669"/>
    <property type="project" value="UniProtKB-SubCell"/>
</dbReference>
<dbReference type="GO" id="GO:0008270">
    <property type="term" value="F:zinc ion binding"/>
    <property type="evidence" value="ECO:0007669"/>
    <property type="project" value="UniProtKB-UniRule"/>
</dbReference>
<dbReference type="GO" id="GO:0006950">
    <property type="term" value="P:response to stress"/>
    <property type="evidence" value="ECO:0007669"/>
    <property type="project" value="UniProtKB-ARBA"/>
</dbReference>
<dbReference type="HAMAP" id="MF_00745">
    <property type="entry name" value="SprT_like"/>
    <property type="match status" value="1"/>
</dbReference>
<dbReference type="InterPro" id="IPR006640">
    <property type="entry name" value="SprT-like_domain"/>
</dbReference>
<dbReference type="InterPro" id="IPR023524">
    <property type="entry name" value="Uncharacterised_SprT-like"/>
</dbReference>
<dbReference type="NCBIfam" id="NF003339">
    <property type="entry name" value="PRK04351.1"/>
    <property type="match status" value="1"/>
</dbReference>
<dbReference type="Pfam" id="PF10263">
    <property type="entry name" value="SprT-like"/>
    <property type="match status" value="1"/>
</dbReference>
<dbReference type="SMART" id="SM00731">
    <property type="entry name" value="SprT"/>
    <property type="match status" value="1"/>
</dbReference>
<organism>
    <name type="scientific">Streptococcus pyogenes serotype M4 (strain MGAS10750)</name>
    <dbReference type="NCBI Taxonomy" id="370554"/>
    <lineage>
        <taxon>Bacteria</taxon>
        <taxon>Bacillati</taxon>
        <taxon>Bacillota</taxon>
        <taxon>Bacilli</taxon>
        <taxon>Lactobacillales</taxon>
        <taxon>Streptococcaceae</taxon>
        <taxon>Streptococcus</taxon>
    </lineage>
</organism>
<protein>
    <recommendedName>
        <fullName evidence="1">Protein SprT-like</fullName>
    </recommendedName>
</protein>